<organism>
    <name type="scientific">Methanococcus maripaludis (strain C5 / ATCC BAA-1333)</name>
    <dbReference type="NCBI Taxonomy" id="402880"/>
    <lineage>
        <taxon>Archaea</taxon>
        <taxon>Methanobacteriati</taxon>
        <taxon>Methanobacteriota</taxon>
        <taxon>Methanomada group</taxon>
        <taxon>Methanococci</taxon>
        <taxon>Methanococcales</taxon>
        <taxon>Methanococcaceae</taxon>
        <taxon>Methanococcus</taxon>
    </lineage>
</organism>
<feature type="chain" id="PRO_1000049619" description="Peroxiredoxin">
    <location>
        <begin position="1"/>
        <end position="217"/>
    </location>
</feature>
<feature type="domain" description="Thioredoxin" evidence="1">
    <location>
        <begin position="2"/>
        <end position="159"/>
    </location>
</feature>
<feature type="active site" description="Cysteine sulfenic acid (-SOH) intermediate" evidence="1">
    <location>
        <position position="46"/>
    </location>
</feature>
<feature type="binding site" evidence="1">
    <location>
        <position position="122"/>
    </location>
    <ligand>
        <name>substrate</name>
    </ligand>
</feature>
<feature type="disulfide bond" description="Interchain (with C-211); in linked form" evidence="1">
    <location>
        <position position="46"/>
    </location>
</feature>
<feature type="disulfide bond" description="Interchain (with C-46); in linked form" evidence="1">
    <location>
        <position position="211"/>
    </location>
</feature>
<gene>
    <name type="ordered locus">MmarC5_0413</name>
</gene>
<protein>
    <recommendedName>
        <fullName evidence="1">Peroxiredoxin</fullName>
        <ecNumber evidence="1">1.11.1.24</ecNumber>
    </recommendedName>
    <alternativeName>
        <fullName evidence="1">Thioredoxin peroxidase</fullName>
    </alternativeName>
    <alternativeName>
        <fullName evidence="1">Thioredoxin-dependent peroxiredoxin</fullName>
    </alternativeName>
</protein>
<name>TDXH_METM5</name>
<sequence>MVVIGEKFPEVEVITTHGKLKLPEHYIEAGKWFVLFSHPGDFTPVCTTEFVAFQKRYDQFRSLNTELIGLSIDQVFSHIKWVEWIKEKLDVDIEFPIIADDRGELAVKLGMISPYKGNNTVRAVFVVDATGTIRAIIYYPQEVGRNMDEVVRLVKALQTADKGYATPANWPENDFLNEKVIVPPANNMDARKNRLEACKSGELEGYDWWFCYTDLKE</sequence>
<comment type="function">
    <text evidence="1">Thiol-specific peroxidase that catalyzes the reduction of hydrogen peroxide and organic hydroperoxides to water and alcohols, respectively. Plays a role in cell protection against oxidative stress by detoxifying peroxides.</text>
</comment>
<comment type="catalytic activity">
    <reaction evidence="1">
        <text>a hydroperoxide + [thioredoxin]-dithiol = an alcohol + [thioredoxin]-disulfide + H2O</text>
        <dbReference type="Rhea" id="RHEA:62620"/>
        <dbReference type="Rhea" id="RHEA-COMP:10698"/>
        <dbReference type="Rhea" id="RHEA-COMP:10700"/>
        <dbReference type="ChEBI" id="CHEBI:15377"/>
        <dbReference type="ChEBI" id="CHEBI:29950"/>
        <dbReference type="ChEBI" id="CHEBI:30879"/>
        <dbReference type="ChEBI" id="CHEBI:35924"/>
        <dbReference type="ChEBI" id="CHEBI:50058"/>
        <dbReference type="EC" id="1.11.1.24"/>
    </reaction>
</comment>
<comment type="subunit">
    <text evidence="1">Homodecamer. Pentamer of dimers that assemble into a ring structure.</text>
</comment>
<comment type="subcellular location">
    <subcellularLocation>
        <location evidence="1">Cytoplasm</location>
    </subcellularLocation>
</comment>
<comment type="miscellaneous">
    <text evidence="1">The active site is a conserved redox-active cysteine residue, the peroxidatic cysteine (C(P)), which makes the nucleophilic attack on the peroxide substrate. The peroxide oxidizes the C(P)-SH to cysteine sulfenic acid (C(P)-SOH), which then reacts with another cysteine residue, the resolving cysteine (C(R)), to form a disulfide bridge. The disulfide is subsequently reduced by an appropriate electron donor to complete the catalytic cycle. Although the primary sequence of this enzyme is similar to those of the 1-Cys Prx6 enzymes, its catalytic properties resemble those of the typical 2-Cys Prxs and C(R) is provided by the other dimeric subunit to form an intersubunit disulfide. The disulfide is subsequently reduced by thioredoxin.</text>
</comment>
<comment type="similarity">
    <text evidence="1">Belongs to the peroxiredoxin family. Prx6 subfamily.</text>
</comment>
<dbReference type="EC" id="1.11.1.24" evidence="1"/>
<dbReference type="EMBL" id="CP000609">
    <property type="protein sequence ID" value="ABO34728.1"/>
    <property type="molecule type" value="Genomic_DNA"/>
</dbReference>
<dbReference type="RefSeq" id="WP_011868183.1">
    <property type="nucleotide sequence ID" value="NC_009135.1"/>
</dbReference>
<dbReference type="SMR" id="A4FWZ9"/>
<dbReference type="STRING" id="402880.MmarC5_0413"/>
<dbReference type="GeneID" id="4928606"/>
<dbReference type="KEGG" id="mmq:MmarC5_0413"/>
<dbReference type="eggNOG" id="arCOG00312">
    <property type="taxonomic scope" value="Archaea"/>
</dbReference>
<dbReference type="HOGENOM" id="CLU_042529_4_4_2"/>
<dbReference type="OrthoDB" id="6924at2157"/>
<dbReference type="Proteomes" id="UP000000253">
    <property type="component" value="Chromosome"/>
</dbReference>
<dbReference type="GO" id="GO:0005829">
    <property type="term" value="C:cytosol"/>
    <property type="evidence" value="ECO:0007669"/>
    <property type="project" value="TreeGrafter"/>
</dbReference>
<dbReference type="GO" id="GO:0008379">
    <property type="term" value="F:thioredoxin peroxidase activity"/>
    <property type="evidence" value="ECO:0007669"/>
    <property type="project" value="TreeGrafter"/>
</dbReference>
<dbReference type="GO" id="GO:0045454">
    <property type="term" value="P:cell redox homeostasis"/>
    <property type="evidence" value="ECO:0007669"/>
    <property type="project" value="TreeGrafter"/>
</dbReference>
<dbReference type="GO" id="GO:0033554">
    <property type="term" value="P:cellular response to stress"/>
    <property type="evidence" value="ECO:0007669"/>
    <property type="project" value="TreeGrafter"/>
</dbReference>
<dbReference type="GO" id="GO:0042744">
    <property type="term" value="P:hydrogen peroxide catabolic process"/>
    <property type="evidence" value="ECO:0007669"/>
    <property type="project" value="TreeGrafter"/>
</dbReference>
<dbReference type="GO" id="GO:0006979">
    <property type="term" value="P:response to oxidative stress"/>
    <property type="evidence" value="ECO:0007669"/>
    <property type="project" value="TreeGrafter"/>
</dbReference>
<dbReference type="CDD" id="cd03016">
    <property type="entry name" value="PRX_1cys"/>
    <property type="match status" value="1"/>
</dbReference>
<dbReference type="FunFam" id="3.30.1020.10:FF:000002">
    <property type="entry name" value="Peroxiredoxin"/>
    <property type="match status" value="1"/>
</dbReference>
<dbReference type="FunFam" id="3.40.30.10:FF:000011">
    <property type="entry name" value="Peroxiredoxin PRX1"/>
    <property type="match status" value="1"/>
</dbReference>
<dbReference type="Gene3D" id="3.30.1020.10">
    <property type="entry name" value="Antioxidant, Horf6, Chain A, domain2"/>
    <property type="match status" value="1"/>
</dbReference>
<dbReference type="Gene3D" id="3.40.30.10">
    <property type="entry name" value="Glutaredoxin"/>
    <property type="match status" value="1"/>
</dbReference>
<dbReference type="HAMAP" id="MF_00401">
    <property type="entry name" value="Peroxiredoxin"/>
    <property type="match status" value="1"/>
</dbReference>
<dbReference type="InterPro" id="IPR000866">
    <property type="entry name" value="AhpC/TSA"/>
</dbReference>
<dbReference type="InterPro" id="IPR050217">
    <property type="entry name" value="Peroxiredoxin"/>
</dbReference>
<dbReference type="InterPro" id="IPR024706">
    <property type="entry name" value="Peroxiredoxin_AhpC-typ"/>
</dbReference>
<dbReference type="InterPro" id="IPR019479">
    <property type="entry name" value="Peroxiredoxin_C"/>
</dbReference>
<dbReference type="InterPro" id="IPR022915">
    <property type="entry name" value="Peroxiredoxin_TDXH"/>
</dbReference>
<dbReference type="InterPro" id="IPR045020">
    <property type="entry name" value="PRX_1cys"/>
</dbReference>
<dbReference type="InterPro" id="IPR036249">
    <property type="entry name" value="Thioredoxin-like_sf"/>
</dbReference>
<dbReference type="InterPro" id="IPR013766">
    <property type="entry name" value="Thioredoxin_domain"/>
</dbReference>
<dbReference type="NCBIfam" id="NF009668">
    <property type="entry name" value="PRK13189.1"/>
    <property type="match status" value="1"/>
</dbReference>
<dbReference type="PANTHER" id="PTHR10681">
    <property type="entry name" value="THIOREDOXIN PEROXIDASE"/>
    <property type="match status" value="1"/>
</dbReference>
<dbReference type="PANTHER" id="PTHR10681:SF128">
    <property type="entry name" value="THIOREDOXIN-DEPENDENT PEROXIDE REDUCTASE, MITOCHONDRIAL"/>
    <property type="match status" value="1"/>
</dbReference>
<dbReference type="Pfam" id="PF10417">
    <property type="entry name" value="1-cysPrx_C"/>
    <property type="match status" value="1"/>
</dbReference>
<dbReference type="Pfam" id="PF00578">
    <property type="entry name" value="AhpC-TSA"/>
    <property type="match status" value="1"/>
</dbReference>
<dbReference type="PIRSF" id="PIRSF000239">
    <property type="entry name" value="AHPC"/>
    <property type="match status" value="1"/>
</dbReference>
<dbReference type="SUPFAM" id="SSF52833">
    <property type="entry name" value="Thioredoxin-like"/>
    <property type="match status" value="1"/>
</dbReference>
<dbReference type="PROSITE" id="PS51352">
    <property type="entry name" value="THIOREDOXIN_2"/>
    <property type="match status" value="1"/>
</dbReference>
<reference key="1">
    <citation type="submission" date="2007-03" db="EMBL/GenBank/DDBJ databases">
        <title>Complete sequence of chromosome of Methanococcus maripaludis C5.</title>
        <authorList>
            <consortium name="US DOE Joint Genome Institute"/>
            <person name="Copeland A."/>
            <person name="Lucas S."/>
            <person name="Lapidus A."/>
            <person name="Barry K."/>
            <person name="Glavina del Rio T."/>
            <person name="Dalin E."/>
            <person name="Tice H."/>
            <person name="Pitluck S."/>
            <person name="Chertkov O."/>
            <person name="Brettin T."/>
            <person name="Bruce D."/>
            <person name="Han C."/>
            <person name="Detter J.C."/>
            <person name="Schmutz J."/>
            <person name="Larimer F."/>
            <person name="Land M."/>
            <person name="Hauser L."/>
            <person name="Kyrpides N."/>
            <person name="Mikhailova N."/>
            <person name="Sieprawska-Lupa M."/>
            <person name="Whitman W.B."/>
            <person name="Richardson P."/>
        </authorList>
    </citation>
    <scope>NUCLEOTIDE SEQUENCE [LARGE SCALE GENOMIC DNA]</scope>
    <source>
        <strain>C5 / ATCC BAA-1333</strain>
    </source>
</reference>
<accession>A4FWZ9</accession>
<proteinExistence type="inferred from homology"/>
<evidence type="ECO:0000255" key="1">
    <source>
        <dbReference type="HAMAP-Rule" id="MF_00401"/>
    </source>
</evidence>
<keyword id="KW-0049">Antioxidant</keyword>
<keyword id="KW-0963">Cytoplasm</keyword>
<keyword id="KW-1015">Disulfide bond</keyword>
<keyword id="KW-0560">Oxidoreductase</keyword>
<keyword id="KW-0575">Peroxidase</keyword>
<keyword id="KW-0676">Redox-active center</keyword>